<organism>
    <name type="scientific">Escherichia coli (strain K12)</name>
    <dbReference type="NCBI Taxonomy" id="83333"/>
    <lineage>
        <taxon>Bacteria</taxon>
        <taxon>Pseudomonadati</taxon>
        <taxon>Pseudomonadota</taxon>
        <taxon>Gammaproteobacteria</taxon>
        <taxon>Enterobacterales</taxon>
        <taxon>Enterobacteriaceae</taxon>
        <taxon>Escherichia</taxon>
    </lineage>
</organism>
<protein>
    <recommendedName>
        <fullName evidence="1">Elongation factor P--(R)-beta-lysine ligase</fullName>
        <shortName evidence="1">EF-P--(R)-beta-lysine ligase</shortName>
        <ecNumber evidence="1">6.3.2.-</ecNumber>
    </recommendedName>
    <alternativeName>
        <fullName evidence="1">EF-P post-translational modification enzyme A</fullName>
    </alternativeName>
    <alternativeName>
        <fullName evidence="1">EF-P-lysine lysyltransferase</fullName>
    </alternativeName>
    <alternativeName>
        <fullName>GX</fullName>
    </alternativeName>
</protein>
<name>EPMA_ECOLI</name>
<accession>P0A8N7</accession>
<accession>P03812</accession>
<accession>P78141</accession>
<accession>Q2M6E7</accession>
<accession>Q8XDP9</accession>
<feature type="chain" id="PRO_0000152719" description="Elongation factor P--(R)-beta-lysine ligase">
    <location>
        <begin position="1"/>
        <end position="325"/>
    </location>
</feature>
<feature type="binding site">
    <location>
        <begin position="76"/>
        <end position="78"/>
    </location>
    <ligand>
        <name>substrate</name>
    </ligand>
</feature>
<feature type="binding site">
    <location>
        <begin position="100"/>
        <end position="102"/>
    </location>
    <ligand>
        <name>ATP</name>
        <dbReference type="ChEBI" id="CHEBI:30616"/>
    </ligand>
</feature>
<feature type="binding site">
    <location>
        <position position="109"/>
    </location>
    <ligand>
        <name>ATP</name>
        <dbReference type="ChEBI" id="CHEBI:30616"/>
    </ligand>
</feature>
<feature type="binding site">
    <location>
        <position position="118"/>
    </location>
    <ligand>
        <name>substrate</name>
    </ligand>
</feature>
<feature type="binding site">
    <location>
        <begin position="244"/>
        <end position="245"/>
    </location>
    <ligand>
        <name>ATP</name>
        <dbReference type="ChEBI" id="CHEBI:30616"/>
    </ligand>
</feature>
<feature type="binding site">
    <location>
        <position position="251"/>
    </location>
    <ligand>
        <name>substrate</name>
    </ligand>
</feature>
<feature type="binding site">
    <location>
        <position position="300"/>
    </location>
    <ligand>
        <name>ATP</name>
        <dbReference type="ChEBI" id="CHEBI:30616"/>
    </ligand>
</feature>
<feature type="mutagenesis site" description="No effect on lysylation activity." evidence="2">
    <original>D</original>
    <variation>A</variation>
    <location>
        <position position="50"/>
    </location>
</feature>
<feature type="mutagenesis site" description="Loss of catalytic activity." evidence="4">
    <original>S</original>
    <variation>A</variation>
    <location>
        <position position="76"/>
    </location>
</feature>
<feature type="mutagenesis site" description="Loss of lysylation activity." evidence="2">
    <original>R</original>
    <variation>A</variation>
    <location>
        <position position="100"/>
    </location>
</feature>
<feature type="mutagenesis site" description="No effect on lysylation activity." evidence="2">
    <original>E</original>
    <variation>A</variation>
    <location>
        <position position="102"/>
    </location>
</feature>
<feature type="mutagenesis site" description="Loss of lysylation activity." evidence="2">
    <original>E</original>
    <variation>A</variation>
    <location>
        <position position="103"/>
    </location>
</feature>
<feature type="mutagenesis site" description="Severe reduction in lysylation activity." evidence="2">
    <original>H</original>
    <variation>A</variation>
    <location>
        <position position="108"/>
    </location>
</feature>
<feature type="mutagenesis site" description="Slight reduction in lysylation activity." evidence="2">
    <original>E</original>
    <variation>A</variation>
    <location>
        <position position="185"/>
    </location>
</feature>
<feature type="mutagenesis site" description="Slight reduction in lysylation activity." evidence="2">
    <original>Q</original>
    <variation>A</variation>
    <location>
        <position position="193"/>
    </location>
</feature>
<feature type="mutagenesis site" description="Loss of lysylation activity." evidence="2">
    <original>E</original>
    <variation>A</variation>
    <location>
        <position position="244"/>
    </location>
</feature>
<feature type="mutagenesis site" description="Loss of lysylation activity." evidence="2">
    <original>N</original>
    <variation>A</variation>
    <location>
        <position position="247"/>
    </location>
</feature>
<feature type="mutagenesis site" description="96% increase in the affinity for L-alpha-lysine. 4-fold decrease in the catalytic efficiency of the (R)-beta-lysine activation reaction." evidence="4">
    <original>A</original>
    <variation>G</variation>
    <location>
        <position position="298"/>
    </location>
</feature>
<feature type="mutagenesis site" description="Loss of lysylation activity." evidence="2">
    <original>R</original>
    <variation>A</variation>
    <location>
        <position position="303"/>
    </location>
</feature>
<feature type="sequence conflict" description="In Ref. 5; AAA23436." evidence="8" ref="5">
    <original>E</original>
    <variation>Q</variation>
    <location>
        <position position="78"/>
    </location>
</feature>
<feature type="sequence conflict" description="In Ref. 5; AAA23436." evidence="8" ref="5">
    <original>A</original>
    <variation>E</variation>
    <location>
        <position position="144"/>
    </location>
</feature>
<feature type="helix" evidence="10">
    <location>
        <begin position="13"/>
        <end position="32"/>
    </location>
</feature>
<feature type="strand" evidence="10">
    <location>
        <begin position="42"/>
        <end position="46"/>
    </location>
</feature>
<feature type="strand" evidence="10">
    <location>
        <begin position="57"/>
        <end position="60"/>
    </location>
</feature>
<feature type="helix" evidence="11">
    <location>
        <begin position="63"/>
        <end position="65"/>
    </location>
</feature>
<feature type="strand" evidence="10">
    <location>
        <begin position="69"/>
        <end position="73"/>
    </location>
</feature>
<feature type="helix" evidence="10">
    <location>
        <begin position="78"/>
        <end position="86"/>
    </location>
</feature>
<feature type="strand" evidence="10">
    <location>
        <begin position="91"/>
        <end position="99"/>
    </location>
</feature>
<feature type="strand" evidence="10">
    <location>
        <begin position="110"/>
        <end position="120"/>
    </location>
</feature>
<feature type="helix" evidence="10">
    <location>
        <begin position="124"/>
        <end position="139"/>
    </location>
</feature>
<feature type="strand" evidence="10">
    <location>
        <begin position="145"/>
        <end position="148"/>
    </location>
</feature>
<feature type="helix" evidence="10">
    <location>
        <begin position="149"/>
        <end position="156"/>
    </location>
</feature>
<feature type="turn" evidence="11">
    <location>
        <begin position="161"/>
        <end position="163"/>
    </location>
</feature>
<feature type="helix" evidence="10">
    <location>
        <begin position="166"/>
        <end position="170"/>
    </location>
</feature>
<feature type="helix" evidence="10">
    <location>
        <begin position="172"/>
        <end position="175"/>
    </location>
</feature>
<feature type="helix" evidence="11">
    <location>
        <begin position="179"/>
        <end position="182"/>
    </location>
</feature>
<feature type="helix" evidence="10">
    <location>
        <begin position="190"/>
        <end position="199"/>
    </location>
</feature>
<feature type="helix" evidence="10">
    <location>
        <begin position="201"/>
        <end position="203"/>
    </location>
</feature>
<feature type="strand" evidence="10">
    <location>
        <begin position="204"/>
        <end position="208"/>
    </location>
</feature>
<feature type="strand" evidence="10">
    <location>
        <begin position="210"/>
        <end position="213"/>
    </location>
</feature>
<feature type="helix" evidence="10">
    <location>
        <begin position="217"/>
        <end position="219"/>
    </location>
</feature>
<feature type="strand" evidence="10">
    <location>
        <begin position="232"/>
        <end position="240"/>
    </location>
</feature>
<feature type="strand" evidence="10">
    <location>
        <begin position="243"/>
        <end position="251"/>
    </location>
</feature>
<feature type="helix" evidence="10">
    <location>
        <begin position="255"/>
        <end position="271"/>
    </location>
</feature>
<feature type="helix" evidence="10">
    <location>
        <begin position="281"/>
        <end position="289"/>
    </location>
</feature>
<feature type="strand" evidence="10">
    <location>
        <begin position="293"/>
        <end position="300"/>
    </location>
</feature>
<feature type="helix" evidence="10">
    <location>
        <begin position="301"/>
        <end position="309"/>
    </location>
</feature>
<feature type="helix" evidence="10">
    <location>
        <begin position="314"/>
        <end position="317"/>
    </location>
</feature>
<feature type="strand" evidence="10">
    <location>
        <begin position="318"/>
        <end position="320"/>
    </location>
</feature>
<feature type="turn" evidence="10">
    <location>
        <begin position="322"/>
        <end position="324"/>
    </location>
</feature>
<sequence>MSETASWQPSASIPNLLKRAAIMAEIRRFFADRGVLEVETPCMSQATVTDIHLVPFETRFVGPGHSQGMNLWLMTSPEYHMKRLLVAGCGPVFQLCRSFRNEEMGRYHNPEFTMLEWYRPHYDMYRLMNEVDDLLQQVLDCPAAESLSYQQAFLRYLEIDPLSADKTQLREVAAKLDLSNVADTEEDRDTLLQLLFTFGVEPNIGKEKPTFVYHFPASQASLAQISTEDHRVAERFEVYYKGIELANGFHELTDAREQQQRFEQDNRKRAARGLPQHPIDQNLIEALKVGMPDCSGVALGVDRLVMLALGAETLAEVIAFSVDRA</sequence>
<comment type="function">
    <text evidence="1 2 4 5">With EpmB is involved in the beta-lysylation step of the post-translational modification of translation elongation factor P (EF-P) on 'Lys-34'. Catalyzes the ATP-dependent activation of (R)-beta-lysine produced by EpmB, forming a lysyl-adenylate, from which the beta-lysyl moiety is then transferred to the epsilon-amino group of EF-P 'Lys-34'. The substrate (R)-beta-lysine is 100-fold more efficient than either (S)-beta-lysine or L-alpha-lysine. Cannot ligate lysine to any tRNA.</text>
</comment>
<comment type="catalytic activity">
    <reaction evidence="4 5">
        <text>D-beta-lysine + L-lysyl-[protein] + ATP = N(6)-((3R)-3,6-diaminohexanoyl)-L-lysyl-[protein] + AMP + diphosphate + H(+)</text>
        <dbReference type="Rhea" id="RHEA:83435"/>
        <dbReference type="Rhea" id="RHEA-COMP:9752"/>
        <dbReference type="Rhea" id="RHEA-COMP:20131"/>
        <dbReference type="ChEBI" id="CHEBI:15378"/>
        <dbReference type="ChEBI" id="CHEBI:29969"/>
        <dbReference type="ChEBI" id="CHEBI:30616"/>
        <dbReference type="ChEBI" id="CHEBI:33019"/>
        <dbReference type="ChEBI" id="CHEBI:84138"/>
        <dbReference type="ChEBI" id="CHEBI:156053"/>
        <dbReference type="ChEBI" id="CHEBI:456215"/>
    </reaction>
    <physiologicalReaction direction="left-to-right" evidence="4 5">
        <dbReference type="Rhea" id="RHEA:83436"/>
    </physiologicalReaction>
</comment>
<comment type="biophysicochemical properties">
    <kinetics>
        <KM evidence="4">213 uM for (R)-beta-lysine</KM>
        <KM evidence="4">8600 uM for L-alpha-lysine</KM>
        <KM evidence="4">6950 uM for (S)-beta-lysine</KM>
        <KM evidence="4">206 uM for ATP</KM>
        <text evidence="4">kcat is 36 min(-1) for the amino acid activation reaction with (R)-beta-lysine as substrate.</text>
    </kinetics>
</comment>
<comment type="subunit">
    <text evidence="1 2 3">Homodimer.</text>
</comment>
<comment type="interaction">
    <interactant intactId="EBI-562598">
        <id>P0A8N7</id>
    </interactant>
    <interactant intactId="EBI-542683">
        <id>P0AFG8</id>
        <label>aceE</label>
    </interactant>
    <organismsDiffer>false</organismsDiffer>
    <experiments>2</experiments>
</comment>
<comment type="disruption phenotype">
    <text evidence="2 6 7">Cells have a reduced pyruvate oxidase activity and a reduced growth rate. Cells lack CadA activity (lysine decarboxylase).</text>
</comment>
<comment type="similarity">
    <text evidence="1">Belongs to the class-II aminoacyl-tRNA synthetase family. EpmA subfamily.</text>
</comment>
<comment type="caution">
    <text evidence="9">Was originally suggested to be a tRNA synthase, however its lack of an anticodon-binding domain made this highly unlikely.</text>
</comment>
<comment type="sequence caution" evidence="8">
    <conflict type="erroneous initiation">
        <sequence resource="EMBL-CDS" id="AAA97054"/>
    </conflict>
    <text>Extended N-terminus.</text>
</comment>
<gene>
    <name evidence="1" type="primary">epmA</name>
    <name type="synonym">genX</name>
    <name type="synonym">poxA</name>
    <name type="synonym">yjeA</name>
    <name type="ordered locus">b4155</name>
    <name type="ordered locus">JW4116</name>
</gene>
<dbReference type="EC" id="6.3.2.-" evidence="1"/>
<dbReference type="EMBL" id="X59988">
    <property type="protein sequence ID" value="CAA42604.1"/>
    <property type="molecule type" value="Genomic_DNA"/>
</dbReference>
<dbReference type="EMBL" id="U14003">
    <property type="protein sequence ID" value="AAA97054.1"/>
    <property type="status" value="ALT_INIT"/>
    <property type="molecule type" value="Genomic_DNA"/>
</dbReference>
<dbReference type="EMBL" id="U00096">
    <property type="protein sequence ID" value="AAC77115.2"/>
    <property type="molecule type" value="Genomic_DNA"/>
</dbReference>
<dbReference type="EMBL" id="AP009048">
    <property type="protein sequence ID" value="BAE78159.1"/>
    <property type="molecule type" value="Genomic_DNA"/>
</dbReference>
<dbReference type="EMBL" id="J01611">
    <property type="protein sequence ID" value="AAA23436.2"/>
    <property type="molecule type" value="Genomic_DNA"/>
</dbReference>
<dbReference type="PIR" id="S56383">
    <property type="entry name" value="S56383"/>
</dbReference>
<dbReference type="RefSeq" id="NP_418579.2">
    <property type="nucleotide sequence ID" value="NC_000913.3"/>
</dbReference>
<dbReference type="RefSeq" id="WP_000004771.1">
    <property type="nucleotide sequence ID" value="NZ_STEB01000014.1"/>
</dbReference>
<dbReference type="PDB" id="3A5Y">
    <property type="method" value="X-ray"/>
    <property type="resolution" value="1.90 A"/>
    <property type="chains" value="A/B/C/D=1-325"/>
</dbReference>
<dbReference type="PDB" id="3A5Z">
    <property type="method" value="X-ray"/>
    <property type="resolution" value="2.50 A"/>
    <property type="chains" value="A/C/E/G=1-325"/>
</dbReference>
<dbReference type="PDBsum" id="3A5Y"/>
<dbReference type="PDBsum" id="3A5Z"/>
<dbReference type="SMR" id="P0A8N7"/>
<dbReference type="BioGRID" id="4260877">
    <property type="interactions" value="8"/>
</dbReference>
<dbReference type="DIP" id="DIP-10535N"/>
<dbReference type="FunCoup" id="P0A8N7">
    <property type="interactions" value="188"/>
</dbReference>
<dbReference type="IntAct" id="P0A8N7">
    <property type="interactions" value="3"/>
</dbReference>
<dbReference type="STRING" id="511145.b4155"/>
<dbReference type="jPOST" id="P0A8N7"/>
<dbReference type="PaxDb" id="511145-b4155"/>
<dbReference type="EnsemblBacteria" id="AAC77115">
    <property type="protein sequence ID" value="AAC77115"/>
    <property type="gene ID" value="b4155"/>
</dbReference>
<dbReference type="GeneID" id="93777667"/>
<dbReference type="GeneID" id="948672"/>
<dbReference type="KEGG" id="ecj:JW4116"/>
<dbReference type="KEGG" id="eco:b4155"/>
<dbReference type="KEGG" id="ecoc:C3026_22460"/>
<dbReference type="PATRIC" id="fig|1411691.4.peg.2543"/>
<dbReference type="EchoBASE" id="EB1196"/>
<dbReference type="eggNOG" id="COG2269">
    <property type="taxonomic scope" value="Bacteria"/>
</dbReference>
<dbReference type="HOGENOM" id="CLU_008255_1_1_6"/>
<dbReference type="InParanoid" id="P0A8N7"/>
<dbReference type="OMA" id="EWYRPGF"/>
<dbReference type="OrthoDB" id="9802326at2"/>
<dbReference type="PhylomeDB" id="P0A8N7"/>
<dbReference type="BioCyc" id="EcoCyc:EG11211-MONOMER"/>
<dbReference type="BioCyc" id="MetaCyc:EG11211-MONOMER"/>
<dbReference type="EvolutionaryTrace" id="P0A8N7"/>
<dbReference type="PRO" id="PR:P0A8N7"/>
<dbReference type="Proteomes" id="UP000000625">
    <property type="component" value="Chromosome"/>
</dbReference>
<dbReference type="GO" id="GO:0005737">
    <property type="term" value="C:cytoplasm"/>
    <property type="evidence" value="ECO:0000318"/>
    <property type="project" value="GO_Central"/>
</dbReference>
<dbReference type="GO" id="GO:0005829">
    <property type="term" value="C:cytosol"/>
    <property type="evidence" value="ECO:0000314"/>
    <property type="project" value="EcoCyc"/>
</dbReference>
<dbReference type="GO" id="GO:0016880">
    <property type="term" value="F:acid-ammonia (or amide) ligase activity"/>
    <property type="evidence" value="ECO:0007669"/>
    <property type="project" value="UniProtKB-UniRule"/>
</dbReference>
<dbReference type="GO" id="GO:0005524">
    <property type="term" value="F:ATP binding"/>
    <property type="evidence" value="ECO:0007669"/>
    <property type="project" value="UniProtKB-UniRule"/>
</dbReference>
<dbReference type="GO" id="GO:0004824">
    <property type="term" value="F:lysine-tRNA ligase activity"/>
    <property type="evidence" value="ECO:0000318"/>
    <property type="project" value="GO_Central"/>
</dbReference>
<dbReference type="GO" id="GO:0042803">
    <property type="term" value="F:protein homodimerization activity"/>
    <property type="evidence" value="ECO:0000314"/>
    <property type="project" value="EcoCyc"/>
</dbReference>
<dbReference type="GO" id="GO:0052868">
    <property type="term" value="F:protein-lysine lysyltransferase activity"/>
    <property type="evidence" value="ECO:0000314"/>
    <property type="project" value="EcoCyc"/>
</dbReference>
<dbReference type="GO" id="GO:0000049">
    <property type="term" value="F:tRNA binding"/>
    <property type="evidence" value="ECO:0000318"/>
    <property type="project" value="GO_Central"/>
</dbReference>
<dbReference type="GO" id="GO:0071468">
    <property type="term" value="P:cellular response to acidic pH"/>
    <property type="evidence" value="ECO:0000315"/>
    <property type="project" value="EcoCyc"/>
</dbReference>
<dbReference type="GO" id="GO:0006430">
    <property type="term" value="P:lysyl-tRNA aminoacylation"/>
    <property type="evidence" value="ECO:0000318"/>
    <property type="project" value="GO_Central"/>
</dbReference>
<dbReference type="FunFam" id="3.30.930.10:FF:000017">
    <property type="entry name" value="Elongation factor P--(R)-beta-lysine ligase"/>
    <property type="match status" value="1"/>
</dbReference>
<dbReference type="Gene3D" id="3.30.930.10">
    <property type="entry name" value="Bira Bifunctional Protein, Domain 2"/>
    <property type="match status" value="1"/>
</dbReference>
<dbReference type="HAMAP" id="MF_00174">
    <property type="entry name" value="EF_P_modif_A"/>
    <property type="match status" value="1"/>
</dbReference>
<dbReference type="InterPro" id="IPR004364">
    <property type="entry name" value="Aa-tRNA-synt_II"/>
</dbReference>
<dbReference type="InterPro" id="IPR006195">
    <property type="entry name" value="aa-tRNA-synth_II"/>
</dbReference>
<dbReference type="InterPro" id="IPR045864">
    <property type="entry name" value="aa-tRNA-synth_II/BPL/LPL"/>
</dbReference>
<dbReference type="InterPro" id="IPR004525">
    <property type="entry name" value="EpmA"/>
</dbReference>
<dbReference type="InterPro" id="IPR018149">
    <property type="entry name" value="Lys-tRNA-synth_II_C"/>
</dbReference>
<dbReference type="NCBIfam" id="TIGR00462">
    <property type="entry name" value="genX"/>
    <property type="match status" value="1"/>
</dbReference>
<dbReference type="NCBIfam" id="NF006828">
    <property type="entry name" value="PRK09350.1"/>
    <property type="match status" value="1"/>
</dbReference>
<dbReference type="PANTHER" id="PTHR42918:SF6">
    <property type="entry name" value="ELONGATION FACTOR P--(R)-BETA-LYSINE LIGASE"/>
    <property type="match status" value="1"/>
</dbReference>
<dbReference type="PANTHER" id="PTHR42918">
    <property type="entry name" value="LYSYL-TRNA SYNTHETASE"/>
    <property type="match status" value="1"/>
</dbReference>
<dbReference type="Pfam" id="PF00152">
    <property type="entry name" value="tRNA-synt_2"/>
    <property type="match status" value="1"/>
</dbReference>
<dbReference type="PRINTS" id="PR00982">
    <property type="entry name" value="TRNASYNTHLYS"/>
</dbReference>
<dbReference type="SUPFAM" id="SSF55681">
    <property type="entry name" value="Class II aaRS and biotin synthetases"/>
    <property type="match status" value="1"/>
</dbReference>
<dbReference type="PROSITE" id="PS50862">
    <property type="entry name" value="AA_TRNA_LIGASE_II"/>
    <property type="match status" value="1"/>
</dbReference>
<keyword id="KW-0002">3D-structure</keyword>
<keyword id="KW-0067">ATP-binding</keyword>
<keyword id="KW-0436">Ligase</keyword>
<keyword id="KW-0547">Nucleotide-binding</keyword>
<keyword id="KW-1185">Reference proteome</keyword>
<proteinExistence type="evidence at protein level"/>
<reference key="1">
    <citation type="journal article" date="1991" name="Gene">
        <title>Evidence for a new Escherichia coli protein resembling a lysyl-tRNA synthetase.</title>
        <authorList>
            <person name="Kong L."/>
            <person name="Fromant M."/>
            <person name="Blanquet S."/>
            <person name="Plateau P."/>
        </authorList>
    </citation>
    <scope>NUCLEOTIDE SEQUENCE [GENOMIC DNA]</scope>
</reference>
<reference key="2">
    <citation type="journal article" date="1995" name="Nucleic Acids Res.">
        <title>Analysis of the Escherichia coli genome VI: DNA sequence of the region from 92.8 through 100 minutes.</title>
        <authorList>
            <person name="Burland V.D."/>
            <person name="Plunkett G. III"/>
            <person name="Sofia H.J."/>
            <person name="Daniels D.L."/>
            <person name="Blattner F.R."/>
        </authorList>
    </citation>
    <scope>NUCLEOTIDE SEQUENCE [LARGE SCALE GENOMIC DNA]</scope>
    <source>
        <strain>K12 / MG1655 / ATCC 47076</strain>
    </source>
</reference>
<reference key="3">
    <citation type="journal article" date="1997" name="Science">
        <title>The complete genome sequence of Escherichia coli K-12.</title>
        <authorList>
            <person name="Blattner F.R."/>
            <person name="Plunkett G. III"/>
            <person name="Bloch C.A."/>
            <person name="Perna N.T."/>
            <person name="Burland V."/>
            <person name="Riley M."/>
            <person name="Collado-Vides J."/>
            <person name="Glasner J.D."/>
            <person name="Rode C.K."/>
            <person name="Mayhew G.F."/>
            <person name="Gregor J."/>
            <person name="Davis N.W."/>
            <person name="Kirkpatrick H.A."/>
            <person name="Goeden M.A."/>
            <person name="Rose D.J."/>
            <person name="Mau B."/>
            <person name="Shao Y."/>
        </authorList>
    </citation>
    <scope>NUCLEOTIDE SEQUENCE [LARGE SCALE GENOMIC DNA]</scope>
    <source>
        <strain>K12 / MG1655 / ATCC 47076</strain>
    </source>
</reference>
<reference key="4">
    <citation type="journal article" date="2006" name="Mol. Syst. Biol.">
        <title>Highly accurate genome sequences of Escherichia coli K-12 strains MG1655 and W3110.</title>
        <authorList>
            <person name="Hayashi K."/>
            <person name="Morooka N."/>
            <person name="Yamamoto Y."/>
            <person name="Fujita K."/>
            <person name="Isono K."/>
            <person name="Choi S."/>
            <person name="Ohtsubo E."/>
            <person name="Baba T."/>
            <person name="Wanner B.L."/>
            <person name="Mori H."/>
            <person name="Horiuchi T."/>
        </authorList>
    </citation>
    <scope>NUCLEOTIDE SEQUENCE [LARGE SCALE GENOMIC DNA]</scope>
    <source>
        <strain>K12 / W3110 / ATCC 27325 / DSM 5911</strain>
    </source>
</reference>
<reference key="5">
    <citation type="journal article" date="1982" name="Eur. J. Biochem.">
        <title>Nucleotide sequence coding for the flavoprotein subunit of the fumarate reductase of Escherichia coli.</title>
        <authorList>
            <person name="Cole S.T."/>
        </authorList>
    </citation>
    <scope>NUCLEOTIDE SEQUENCE [GENOMIC DNA] OF 1-152</scope>
</reference>
<reference key="6">
    <citation type="journal article" date="1982" name="J. Bacteriol.">
        <title>Mapping nonselectable genes of Escherichia coli by using transposon Tn10: location of a gene affecting pyruvate oxidase.</title>
        <authorList>
            <person name="Chang Y.-Y."/>
            <person name="Cronan J.E. Jr."/>
        </authorList>
    </citation>
    <scope>DISRUPTION PHENOTYPE</scope>
    <source>
        <strain>K12</strain>
    </source>
</reference>
<reference key="7">
    <citation type="journal article" date="1989" name="Proc. Natl. Acad. Sci. U.S.A.">
        <title>Homology of aspartyl- and lysyl-tRNA synthetases.</title>
        <authorList>
            <person name="Gampel A."/>
            <person name="Tzagoloff A."/>
        </authorList>
    </citation>
    <scope>SIMILARITY TO CLASS-II AA-TRNA SYNTHETASES</scope>
</reference>
<reference key="8">
    <citation type="journal article" date="2010" name="Acta Crystallogr. F">
        <title>Crystallization and preliminary X-ray crystallographic study of GenX, a lysyl-tRNA synthetase paralogue from Escherichia coli, in complex with translation elongation factor P.</title>
        <authorList>
            <person name="Sumida T."/>
            <person name="Yanagisawa T."/>
            <person name="Ishii R."/>
            <person name="Yokoyama S."/>
        </authorList>
    </citation>
    <scope>CRYSTALLIZATION</scope>
    <scope>SUBUNIT</scope>
    <source>
        <strain>K12 / MC4100 / ATCC 35695 / DSM 6574</strain>
    </source>
</reference>
<reference key="9">
    <citation type="journal article" date="2010" name="Biol. Direct">
        <title>Predicting the pathway involved in post-translational modification of Elongation factor P in a subset of bacterial species.</title>
        <authorList>
            <person name="Bailly M."/>
            <person name="de Crecy-Lagard V."/>
        </authorList>
    </citation>
    <scope>POSSIBLE FUNCTION</scope>
</reference>
<reference key="10">
    <citation type="journal article" date="2011" name="Nat. Chem. Biol.">
        <title>The tRNA synthetase paralog PoxA modifies elongation factor-P with (R)-beta-lysine.</title>
        <authorList>
            <person name="Roy H."/>
            <person name="Zou S.B."/>
            <person name="Bullwinkle T.J."/>
            <person name="Wolfe B.S."/>
            <person name="Gilreath M.S."/>
            <person name="Forsyth C.J."/>
            <person name="Navarre W.W."/>
            <person name="Ibba M."/>
        </authorList>
    </citation>
    <scope>FUNCTION</scope>
    <scope>CATALYTIC ACTIVITY</scope>
    <scope>SUBSTRATE SPECIFICITY</scope>
    <scope>KINETIC PARAMETERS</scope>
    <scope>MUTAGENESIS OF SER-76 AND ALA-298</scope>
    <source>
        <strain>K12</strain>
    </source>
</reference>
<reference key="11">
    <citation type="journal article" date="2012" name="J. Biol. Chem.">
        <title>Post-translational modification by beta-lysylation is required for activity of Escherichia coli elongation factor P (EF-P).</title>
        <authorList>
            <person name="Park J.H."/>
            <person name="Johansson H.E."/>
            <person name="Aoki H."/>
            <person name="Huang B.X."/>
            <person name="Kim H.Y."/>
            <person name="Ganoza M.C."/>
            <person name="Park M.H."/>
        </authorList>
    </citation>
    <scope>FUNCTION IN EF-P BETA-LYSYLATION</scope>
    <scope>CATALYTIC ACTIVITY</scope>
    <source>
        <strain>K12 / MG1655 / ATCC 47076</strain>
    </source>
</reference>
<reference key="12">
    <citation type="journal article" date="2012" name="Nat. Chem. Biol.">
        <title>Lys34 of translation elongation factor EF-P is hydroxylated by YfcM.</title>
        <authorList>
            <person name="Peil L."/>
            <person name="Starosta A.L."/>
            <person name="Virumae K."/>
            <person name="Atkinson G.C."/>
            <person name="Tenson T."/>
            <person name="Remme J."/>
            <person name="Wilson D.N."/>
        </authorList>
    </citation>
    <scope>GENE NAME</scope>
    <scope>PATHWAY</scope>
</reference>
<reference key="13">
    <citation type="journal article" date="2013" name="Science">
        <title>Translation elongation factor EF-P alleviates ribosome stalling at polyproline stretches.</title>
        <authorList>
            <person name="Ude S."/>
            <person name="Lassak J."/>
            <person name="Starosta A.L."/>
            <person name="Kraxenberger T."/>
            <person name="Wilson D.N."/>
            <person name="Jung K."/>
        </authorList>
    </citation>
    <scope>DISRUPTION PHENOTYPE</scope>
    <source>
        <strain>K12 / BW25113</strain>
        <strain>K12 / MG1655 / ATCC 47076</strain>
    </source>
</reference>
<reference key="14">
    <citation type="journal article" date="2010" name="Nat. Struct. Mol. Biol.">
        <title>A paralog of lysyl-tRNA synthetase aminoacylates a conserved lysine residue in translation elongation factor P.</title>
        <authorList>
            <person name="Yanagisawa T."/>
            <person name="Sumida T."/>
            <person name="Ishii R."/>
            <person name="Takemoto C."/>
            <person name="Yokoyama S."/>
        </authorList>
    </citation>
    <scope>X-RAY CRYSTALLOGRAPHY (1.90 ANGSTROMS) IN COMPLEXES WITH LYSYL-ADENYLATE ANALOG AND EF-P</scope>
    <scope>FUNCTION IN EF-P LYSYLATION</scope>
    <scope>SUBUNIT</scope>
    <scope>DISRUPTION PHENOTYPE</scope>
    <scope>MUTAGENESIS OF ASP-50; ARG-100; GLU-102; GLU-103; HIS-108; GLU-185; GLN-193; GLU-244; ASN-247 AND ARG-303</scope>
    <source>
        <strain>K12 / BW25113</strain>
        <strain>K12 / MC4100 / ATCC 35695 / DSM 6574</strain>
    </source>
</reference>
<evidence type="ECO:0000255" key="1">
    <source>
        <dbReference type="HAMAP-Rule" id="MF_00174"/>
    </source>
</evidence>
<evidence type="ECO:0000269" key="2">
    <source>
    </source>
</evidence>
<evidence type="ECO:0000269" key="3">
    <source>
    </source>
</evidence>
<evidence type="ECO:0000269" key="4">
    <source>
    </source>
</evidence>
<evidence type="ECO:0000269" key="5">
    <source>
    </source>
</evidence>
<evidence type="ECO:0000269" key="6">
    <source>
    </source>
</evidence>
<evidence type="ECO:0000269" key="7">
    <source>
    </source>
</evidence>
<evidence type="ECO:0000305" key="8"/>
<evidence type="ECO:0000305" key="9">
    <source>
    </source>
</evidence>
<evidence type="ECO:0007829" key="10">
    <source>
        <dbReference type="PDB" id="3A5Y"/>
    </source>
</evidence>
<evidence type="ECO:0007829" key="11">
    <source>
        <dbReference type="PDB" id="3A5Z"/>
    </source>
</evidence>